<dbReference type="EC" id="3.4.11.9"/>
<dbReference type="EMBL" id="EQ999986">
    <property type="protein sequence ID" value="EEQ85970.2"/>
    <property type="status" value="ALT_INIT"/>
    <property type="molecule type" value="Genomic_DNA"/>
</dbReference>
<dbReference type="SMR" id="C5GXZ9"/>
<dbReference type="STRING" id="559297.C5GXZ9"/>
<dbReference type="MEROPS" id="M24.009"/>
<dbReference type="eggNOG" id="KOG2413">
    <property type="taxonomic scope" value="Eukaryota"/>
</dbReference>
<dbReference type="HOGENOM" id="CLU_011781_2_2_1"/>
<dbReference type="GO" id="GO:0005737">
    <property type="term" value="C:cytoplasm"/>
    <property type="evidence" value="ECO:0007669"/>
    <property type="project" value="UniProtKB-ARBA"/>
</dbReference>
<dbReference type="GO" id="GO:0046872">
    <property type="term" value="F:metal ion binding"/>
    <property type="evidence" value="ECO:0007669"/>
    <property type="project" value="UniProtKB-KW"/>
</dbReference>
<dbReference type="GO" id="GO:0070006">
    <property type="term" value="F:metalloaminopeptidase activity"/>
    <property type="evidence" value="ECO:0007669"/>
    <property type="project" value="InterPro"/>
</dbReference>
<dbReference type="GO" id="GO:0006508">
    <property type="term" value="P:proteolysis"/>
    <property type="evidence" value="ECO:0007669"/>
    <property type="project" value="UniProtKB-KW"/>
</dbReference>
<dbReference type="CDD" id="cd01085">
    <property type="entry name" value="APP"/>
    <property type="match status" value="1"/>
</dbReference>
<dbReference type="FunFam" id="3.40.350.10:FF:000010">
    <property type="entry name" value="Probable Xaa-Pro aminopeptidase P"/>
    <property type="match status" value="1"/>
</dbReference>
<dbReference type="FunFam" id="3.90.230.10:FF:000007">
    <property type="entry name" value="Xaa-Pro aminopeptidase P"/>
    <property type="match status" value="1"/>
</dbReference>
<dbReference type="FunFam" id="3.40.350.10:FF:000003">
    <property type="entry name" value="Xaa-pro aminopeptidase P"/>
    <property type="match status" value="1"/>
</dbReference>
<dbReference type="Gene3D" id="3.90.230.10">
    <property type="entry name" value="Creatinase/methionine aminopeptidase superfamily"/>
    <property type="match status" value="1"/>
</dbReference>
<dbReference type="Gene3D" id="3.40.350.10">
    <property type="entry name" value="Creatinase/prolidase N-terminal domain"/>
    <property type="match status" value="2"/>
</dbReference>
<dbReference type="InterPro" id="IPR029149">
    <property type="entry name" value="Creatin/AminoP/Spt16_N"/>
</dbReference>
<dbReference type="InterPro" id="IPR036005">
    <property type="entry name" value="Creatinase/aminopeptidase-like"/>
</dbReference>
<dbReference type="InterPro" id="IPR000587">
    <property type="entry name" value="Creatinase_N"/>
</dbReference>
<dbReference type="InterPro" id="IPR000994">
    <property type="entry name" value="Pept_M24"/>
</dbReference>
<dbReference type="InterPro" id="IPR033740">
    <property type="entry name" value="Pept_M24B"/>
</dbReference>
<dbReference type="InterPro" id="IPR032416">
    <property type="entry name" value="Peptidase_M24_C"/>
</dbReference>
<dbReference type="InterPro" id="IPR001131">
    <property type="entry name" value="Peptidase_M24B_aminopep-P_CS"/>
</dbReference>
<dbReference type="InterPro" id="IPR050422">
    <property type="entry name" value="X-Pro_aminopeptidase_P"/>
</dbReference>
<dbReference type="PANTHER" id="PTHR43763">
    <property type="entry name" value="XAA-PRO AMINOPEPTIDASE 1"/>
    <property type="match status" value="1"/>
</dbReference>
<dbReference type="PANTHER" id="PTHR43763:SF6">
    <property type="entry name" value="XAA-PRO AMINOPEPTIDASE 1"/>
    <property type="match status" value="1"/>
</dbReference>
<dbReference type="Pfam" id="PF01321">
    <property type="entry name" value="Creatinase_N"/>
    <property type="match status" value="1"/>
</dbReference>
<dbReference type="Pfam" id="PF16189">
    <property type="entry name" value="Creatinase_N_2"/>
    <property type="match status" value="1"/>
</dbReference>
<dbReference type="Pfam" id="PF00557">
    <property type="entry name" value="Peptidase_M24"/>
    <property type="match status" value="1"/>
</dbReference>
<dbReference type="Pfam" id="PF16188">
    <property type="entry name" value="Peptidase_M24_C"/>
    <property type="match status" value="1"/>
</dbReference>
<dbReference type="SUPFAM" id="SSF55920">
    <property type="entry name" value="Creatinase/aminopeptidase"/>
    <property type="match status" value="1"/>
</dbReference>
<dbReference type="SUPFAM" id="SSF53092">
    <property type="entry name" value="Creatinase/prolidase N-terminal domain"/>
    <property type="match status" value="1"/>
</dbReference>
<dbReference type="PROSITE" id="PS00491">
    <property type="entry name" value="PROLINE_PEPTIDASE"/>
    <property type="match status" value="1"/>
</dbReference>
<name>AMPP1_AJEDR</name>
<comment type="function">
    <text evidence="1">Catalyzes the removal of a penultimate prolyl residue from the N-termini of peptides.</text>
</comment>
<comment type="catalytic activity">
    <reaction>
        <text>Release of any N-terminal amino acid, including proline, that is linked to proline, even from a dipeptide or tripeptide.</text>
        <dbReference type="EC" id="3.4.11.9"/>
    </reaction>
</comment>
<comment type="cofactor">
    <cofactor evidence="1">
        <name>Mn(2+)</name>
        <dbReference type="ChEBI" id="CHEBI:29035"/>
    </cofactor>
    <text evidence="1">Binds 2 manganese ions per subunit.</text>
</comment>
<comment type="similarity">
    <text evidence="2">Belongs to the peptidase M24B family.</text>
</comment>
<comment type="sequence caution" evidence="2">
    <conflict type="erroneous initiation">
        <sequence resource="EMBL-CDS" id="EEQ85970"/>
    </conflict>
    <text>Extended N-terminus.</text>
</comment>
<gene>
    <name type="primary">AMPP</name>
    <name type="ORF">BDCG_09239</name>
</gene>
<protein>
    <recommendedName>
        <fullName>Probable Xaa-Pro aminopeptidase P</fullName>
        <shortName>AMPP</shortName>
        <shortName>Aminopeptidase P</shortName>
        <ecNumber>3.4.11.9</ecNumber>
    </recommendedName>
    <alternativeName>
        <fullName>Aminoacylproline aminopeptidase</fullName>
    </alternativeName>
    <alternativeName>
        <fullName>Prolidase</fullName>
    </alternativeName>
</protein>
<accession>C5GXZ9</accession>
<sequence>MGPVDTSQRLARLRELMQERKVDVYIVPSEDSHQSEYIAPCDGRREFISGFTGSAGCAIVSMSKAALSTDGRYFNQAAKQLDNNWMLLKRGFENMPTWQEWTAEQAEGGKVVGVDPSLITASEARSLSETIEKSGGSLQGVQENLIDLVWGKERPARPSEKVALHPIEFAGKSFEEKISDLRKELQKKKSAGFVISMLDEIAWLFNLRGNDIPYNPVFFAYAIITPTTADLYIDDEKLPAEVKKYLGDQVSVKPYGSIFEDAKALSQSAQKKSDGDASTSPSEKFLISTKASWSLSLALGGEKNVEEVRSPITDAKAIKNEAELEGMRACHIRDGAALTEYFAWLENELVNKKTVLNEVDGSDKLEQIRSKHKHFVGLSFDTISSTGPNAAVIHYKAERDTCSIIDPKAVYLCDSGAQYLDGTTDTTRTLHFGEPTEMERKAYTLVLKGLISIDTAVFPKGTTGFALDAFARQHLWKEGLDYLHGTGHGVGSYLNVHEGPIGLGTRVQYAEVAITPGNVISDEPGFYEDGVFGIRIENIIIAKEVKTTHGFGEKPWLGFEHVTMTPLCQKLINPSLLTDGEKKWVNDYHSKVWEKTSSYFENDELTRNWLKRETQPI</sequence>
<keyword id="KW-0031">Aminopeptidase</keyword>
<keyword id="KW-0378">Hydrolase</keyword>
<keyword id="KW-0464">Manganese</keyword>
<keyword id="KW-0479">Metal-binding</keyword>
<keyword id="KW-0482">Metalloprotease</keyword>
<keyword id="KW-0645">Protease</keyword>
<organism>
    <name type="scientific">Ajellomyces dermatitidis (strain ER-3 / ATCC MYA-2586)</name>
    <name type="common">Blastomyces dermatitidis</name>
    <dbReference type="NCBI Taxonomy" id="559297"/>
    <lineage>
        <taxon>Eukaryota</taxon>
        <taxon>Fungi</taxon>
        <taxon>Dikarya</taxon>
        <taxon>Ascomycota</taxon>
        <taxon>Pezizomycotina</taxon>
        <taxon>Eurotiomycetes</taxon>
        <taxon>Eurotiomycetidae</taxon>
        <taxon>Onygenales</taxon>
        <taxon>Ajellomycetaceae</taxon>
        <taxon>Blastomyces</taxon>
    </lineage>
</organism>
<proteinExistence type="inferred from homology"/>
<feature type="chain" id="PRO_0000411773" description="Probable Xaa-Pro aminopeptidase P">
    <location>
        <begin position="1"/>
        <end position="617"/>
    </location>
</feature>
<feature type="binding site" evidence="1">
    <location>
        <position position="414"/>
    </location>
    <ligand>
        <name>Mn(2+)</name>
        <dbReference type="ChEBI" id="CHEBI:29035"/>
        <label>2</label>
    </ligand>
</feature>
<feature type="binding site" evidence="1">
    <location>
        <position position="425"/>
    </location>
    <ligand>
        <name>Mn(2+)</name>
        <dbReference type="ChEBI" id="CHEBI:29035"/>
        <label>1</label>
    </ligand>
</feature>
<feature type="binding site" evidence="1">
    <location>
        <position position="425"/>
    </location>
    <ligand>
        <name>Mn(2+)</name>
        <dbReference type="ChEBI" id="CHEBI:29035"/>
        <label>2</label>
    </ligand>
</feature>
<feature type="binding site" evidence="1">
    <location>
        <position position="523"/>
    </location>
    <ligand>
        <name>Mn(2+)</name>
        <dbReference type="ChEBI" id="CHEBI:29035"/>
        <label>1</label>
    </ligand>
</feature>
<feature type="binding site" evidence="1">
    <location>
        <position position="537"/>
    </location>
    <ligand>
        <name>Mn(2+)</name>
        <dbReference type="ChEBI" id="CHEBI:29035"/>
        <label>1</label>
    </ligand>
</feature>
<feature type="binding site" evidence="1">
    <location>
        <position position="537"/>
    </location>
    <ligand>
        <name>Mn(2+)</name>
        <dbReference type="ChEBI" id="CHEBI:29035"/>
        <label>2</label>
    </ligand>
</feature>
<reference key="1">
    <citation type="journal article" date="2015" name="PLoS Genet.">
        <title>The dynamic genome and transcriptome of the human fungal pathogen Blastomyces and close relative Emmonsia.</title>
        <authorList>
            <person name="Munoz J.F."/>
            <person name="Gauthier G.M."/>
            <person name="Desjardins C.A."/>
            <person name="Gallo J.E."/>
            <person name="Holder J."/>
            <person name="Sullivan T.D."/>
            <person name="Marty A.J."/>
            <person name="Carmen J.C."/>
            <person name="Chen Z."/>
            <person name="Ding L."/>
            <person name="Gujja S."/>
            <person name="Magrini V."/>
            <person name="Misas E."/>
            <person name="Mitreva M."/>
            <person name="Priest M."/>
            <person name="Saif S."/>
            <person name="Whiston E.A."/>
            <person name="Young S."/>
            <person name="Zeng Q."/>
            <person name="Goldman W.E."/>
            <person name="Mardis E.R."/>
            <person name="Taylor J.W."/>
            <person name="McEwen J.G."/>
            <person name="Clay O.K."/>
            <person name="Klein B.S."/>
            <person name="Cuomo C.A."/>
        </authorList>
    </citation>
    <scope>NUCLEOTIDE SEQUENCE [LARGE SCALE GENOMIC DNA]</scope>
    <source>
        <strain>ER-3 / ATCC MYA-2586</strain>
    </source>
</reference>
<evidence type="ECO:0000250" key="1"/>
<evidence type="ECO:0000305" key="2"/>